<protein>
    <recommendedName>
        <fullName evidence="1">3-dehydroquinate synthase</fullName>
        <shortName evidence="1">DHQS</shortName>
        <ecNumber evidence="1">4.2.3.4</ecNumber>
    </recommendedName>
</protein>
<evidence type="ECO:0000255" key="1">
    <source>
        <dbReference type="HAMAP-Rule" id="MF_00110"/>
    </source>
</evidence>
<name>AROB_ENTFA</name>
<reference key="1">
    <citation type="journal article" date="2003" name="Science">
        <title>Role of mobile DNA in the evolution of vancomycin-resistant Enterococcus faecalis.</title>
        <authorList>
            <person name="Paulsen I.T."/>
            <person name="Banerjei L."/>
            <person name="Myers G.S.A."/>
            <person name="Nelson K.E."/>
            <person name="Seshadri R."/>
            <person name="Read T.D."/>
            <person name="Fouts D.E."/>
            <person name="Eisen J.A."/>
            <person name="Gill S.R."/>
            <person name="Heidelberg J.F."/>
            <person name="Tettelin H."/>
            <person name="Dodson R.J."/>
            <person name="Umayam L.A."/>
            <person name="Brinkac L.M."/>
            <person name="Beanan M.J."/>
            <person name="Daugherty S.C."/>
            <person name="DeBoy R.T."/>
            <person name="Durkin S.A."/>
            <person name="Kolonay J.F."/>
            <person name="Madupu R."/>
            <person name="Nelson W.C."/>
            <person name="Vamathevan J.J."/>
            <person name="Tran B."/>
            <person name="Upton J."/>
            <person name="Hansen T."/>
            <person name="Shetty J."/>
            <person name="Khouri H.M."/>
            <person name="Utterback T.R."/>
            <person name="Radune D."/>
            <person name="Ketchum K.A."/>
            <person name="Dougherty B.A."/>
            <person name="Fraser C.M."/>
        </authorList>
    </citation>
    <scope>NUCLEOTIDE SEQUENCE [LARGE SCALE GENOMIC DNA]</scope>
    <source>
        <strain>ATCC 700802 / V583</strain>
    </source>
</reference>
<organism>
    <name type="scientific">Enterococcus faecalis (strain ATCC 700802 / V583)</name>
    <dbReference type="NCBI Taxonomy" id="226185"/>
    <lineage>
        <taxon>Bacteria</taxon>
        <taxon>Bacillati</taxon>
        <taxon>Bacillota</taxon>
        <taxon>Bacilli</taxon>
        <taxon>Lactobacillales</taxon>
        <taxon>Enterococcaceae</taxon>
        <taxon>Enterococcus</taxon>
    </lineage>
</organism>
<keyword id="KW-0028">Amino-acid biosynthesis</keyword>
<keyword id="KW-0057">Aromatic amino acid biosynthesis</keyword>
<keyword id="KW-0170">Cobalt</keyword>
<keyword id="KW-0963">Cytoplasm</keyword>
<keyword id="KW-0456">Lyase</keyword>
<keyword id="KW-0479">Metal-binding</keyword>
<keyword id="KW-0520">NAD</keyword>
<keyword id="KW-0547">Nucleotide-binding</keyword>
<keyword id="KW-1185">Reference proteome</keyword>
<keyword id="KW-0862">Zinc</keyword>
<comment type="function">
    <text evidence="1">Catalyzes the conversion of 3-deoxy-D-arabino-heptulosonate 7-phosphate (DAHP) to dehydroquinate (DHQ).</text>
</comment>
<comment type="catalytic activity">
    <reaction evidence="1">
        <text>7-phospho-2-dehydro-3-deoxy-D-arabino-heptonate = 3-dehydroquinate + phosphate</text>
        <dbReference type="Rhea" id="RHEA:21968"/>
        <dbReference type="ChEBI" id="CHEBI:32364"/>
        <dbReference type="ChEBI" id="CHEBI:43474"/>
        <dbReference type="ChEBI" id="CHEBI:58394"/>
        <dbReference type="EC" id="4.2.3.4"/>
    </reaction>
</comment>
<comment type="cofactor">
    <cofactor evidence="1">
        <name>NAD(+)</name>
        <dbReference type="ChEBI" id="CHEBI:57540"/>
    </cofactor>
</comment>
<comment type="cofactor">
    <cofactor evidence="1">
        <name>Co(2+)</name>
        <dbReference type="ChEBI" id="CHEBI:48828"/>
    </cofactor>
    <cofactor evidence="1">
        <name>Zn(2+)</name>
        <dbReference type="ChEBI" id="CHEBI:29105"/>
    </cofactor>
    <text evidence="1">Binds 1 divalent metal cation per subunit. Can use either Co(2+) or Zn(2+).</text>
</comment>
<comment type="pathway">
    <text evidence="1">Metabolic intermediate biosynthesis; chorismate biosynthesis; chorismate from D-erythrose 4-phosphate and phosphoenolpyruvate: step 2/7.</text>
</comment>
<comment type="subcellular location">
    <subcellularLocation>
        <location evidence="1">Cytoplasm</location>
    </subcellularLocation>
</comment>
<comment type="similarity">
    <text evidence="1">Belongs to the sugar phosphate cyclases superfamily. Dehydroquinate synthase family.</text>
</comment>
<feature type="chain" id="PRO_0000140740" description="3-dehydroquinate synthase">
    <location>
        <begin position="1"/>
        <end position="358"/>
    </location>
</feature>
<feature type="binding site" evidence="1">
    <location>
        <begin position="105"/>
        <end position="109"/>
    </location>
    <ligand>
        <name>NAD(+)</name>
        <dbReference type="ChEBI" id="CHEBI:57540"/>
    </ligand>
</feature>
<feature type="binding site" evidence="1">
    <location>
        <begin position="129"/>
        <end position="130"/>
    </location>
    <ligand>
        <name>NAD(+)</name>
        <dbReference type="ChEBI" id="CHEBI:57540"/>
    </ligand>
</feature>
<feature type="binding site" evidence="1">
    <location>
        <position position="142"/>
    </location>
    <ligand>
        <name>NAD(+)</name>
        <dbReference type="ChEBI" id="CHEBI:57540"/>
    </ligand>
</feature>
<feature type="binding site" evidence="1">
    <location>
        <position position="151"/>
    </location>
    <ligand>
        <name>NAD(+)</name>
        <dbReference type="ChEBI" id="CHEBI:57540"/>
    </ligand>
</feature>
<feature type="binding site" evidence="1">
    <location>
        <begin position="169"/>
        <end position="172"/>
    </location>
    <ligand>
        <name>NAD(+)</name>
        <dbReference type="ChEBI" id="CHEBI:57540"/>
    </ligand>
</feature>
<feature type="binding site" evidence="1">
    <location>
        <position position="184"/>
    </location>
    <ligand>
        <name>Zn(2+)</name>
        <dbReference type="ChEBI" id="CHEBI:29105"/>
    </ligand>
</feature>
<feature type="binding site" evidence="1">
    <location>
        <position position="245"/>
    </location>
    <ligand>
        <name>Zn(2+)</name>
        <dbReference type="ChEBI" id="CHEBI:29105"/>
    </ligand>
</feature>
<feature type="binding site" evidence="1">
    <location>
        <position position="262"/>
    </location>
    <ligand>
        <name>Zn(2+)</name>
        <dbReference type="ChEBI" id="CHEBI:29105"/>
    </ligand>
</feature>
<dbReference type="EC" id="4.2.3.4" evidence="1"/>
<dbReference type="EMBL" id="AE016830">
    <property type="protein sequence ID" value="AAO81350.1"/>
    <property type="molecule type" value="Genomic_DNA"/>
</dbReference>
<dbReference type="RefSeq" id="NP_815280.1">
    <property type="nucleotide sequence ID" value="NC_004668.1"/>
</dbReference>
<dbReference type="RefSeq" id="WP_002382321.1">
    <property type="nucleotide sequence ID" value="NZ_KE136528.1"/>
</dbReference>
<dbReference type="SMR" id="P0DH71"/>
<dbReference type="STRING" id="226185.EF_1563"/>
<dbReference type="EnsemblBacteria" id="AAO81350">
    <property type="protein sequence ID" value="AAO81350"/>
    <property type="gene ID" value="EF_1563"/>
</dbReference>
<dbReference type="KEGG" id="efa:EF1563"/>
<dbReference type="PATRIC" id="fig|226185.45.peg.1942"/>
<dbReference type="eggNOG" id="COG0337">
    <property type="taxonomic scope" value="Bacteria"/>
</dbReference>
<dbReference type="HOGENOM" id="CLU_001201_0_1_9"/>
<dbReference type="UniPathway" id="UPA00053">
    <property type="reaction ID" value="UER00085"/>
</dbReference>
<dbReference type="Proteomes" id="UP000001415">
    <property type="component" value="Chromosome"/>
</dbReference>
<dbReference type="GO" id="GO:0005737">
    <property type="term" value="C:cytoplasm"/>
    <property type="evidence" value="ECO:0007669"/>
    <property type="project" value="UniProtKB-SubCell"/>
</dbReference>
<dbReference type="GO" id="GO:0003856">
    <property type="term" value="F:3-dehydroquinate synthase activity"/>
    <property type="evidence" value="ECO:0007669"/>
    <property type="project" value="UniProtKB-UniRule"/>
</dbReference>
<dbReference type="GO" id="GO:0046872">
    <property type="term" value="F:metal ion binding"/>
    <property type="evidence" value="ECO:0007669"/>
    <property type="project" value="UniProtKB-KW"/>
</dbReference>
<dbReference type="GO" id="GO:0000166">
    <property type="term" value="F:nucleotide binding"/>
    <property type="evidence" value="ECO:0007669"/>
    <property type="project" value="UniProtKB-KW"/>
</dbReference>
<dbReference type="GO" id="GO:0008652">
    <property type="term" value="P:amino acid biosynthetic process"/>
    <property type="evidence" value="ECO:0007669"/>
    <property type="project" value="UniProtKB-KW"/>
</dbReference>
<dbReference type="GO" id="GO:0009073">
    <property type="term" value="P:aromatic amino acid family biosynthetic process"/>
    <property type="evidence" value="ECO:0007669"/>
    <property type="project" value="UniProtKB-KW"/>
</dbReference>
<dbReference type="GO" id="GO:0009423">
    <property type="term" value="P:chorismate biosynthetic process"/>
    <property type="evidence" value="ECO:0007669"/>
    <property type="project" value="UniProtKB-UniRule"/>
</dbReference>
<dbReference type="CDD" id="cd08195">
    <property type="entry name" value="DHQS"/>
    <property type="match status" value="1"/>
</dbReference>
<dbReference type="FunFam" id="3.40.50.1970:FF:000001">
    <property type="entry name" value="3-dehydroquinate synthase"/>
    <property type="match status" value="1"/>
</dbReference>
<dbReference type="Gene3D" id="3.40.50.1970">
    <property type="match status" value="1"/>
</dbReference>
<dbReference type="Gene3D" id="1.20.1090.10">
    <property type="entry name" value="Dehydroquinate synthase-like - alpha domain"/>
    <property type="match status" value="1"/>
</dbReference>
<dbReference type="HAMAP" id="MF_00110">
    <property type="entry name" value="DHQ_synthase"/>
    <property type="match status" value="1"/>
</dbReference>
<dbReference type="InterPro" id="IPR050071">
    <property type="entry name" value="Dehydroquinate_synthase"/>
</dbReference>
<dbReference type="InterPro" id="IPR016037">
    <property type="entry name" value="DHQ_synth_AroB"/>
</dbReference>
<dbReference type="InterPro" id="IPR030963">
    <property type="entry name" value="DHQ_synth_fam"/>
</dbReference>
<dbReference type="InterPro" id="IPR030960">
    <property type="entry name" value="DHQS/DOIS_N"/>
</dbReference>
<dbReference type="InterPro" id="IPR056179">
    <property type="entry name" value="DHQS_C"/>
</dbReference>
<dbReference type="NCBIfam" id="TIGR01357">
    <property type="entry name" value="aroB"/>
    <property type="match status" value="1"/>
</dbReference>
<dbReference type="PANTHER" id="PTHR43622">
    <property type="entry name" value="3-DEHYDROQUINATE SYNTHASE"/>
    <property type="match status" value="1"/>
</dbReference>
<dbReference type="PANTHER" id="PTHR43622:SF7">
    <property type="entry name" value="3-DEHYDROQUINATE SYNTHASE, CHLOROPLASTIC"/>
    <property type="match status" value="1"/>
</dbReference>
<dbReference type="Pfam" id="PF01761">
    <property type="entry name" value="DHQ_synthase"/>
    <property type="match status" value="1"/>
</dbReference>
<dbReference type="Pfam" id="PF24621">
    <property type="entry name" value="DHQS_C"/>
    <property type="match status" value="1"/>
</dbReference>
<dbReference type="PIRSF" id="PIRSF001455">
    <property type="entry name" value="DHQ_synth"/>
    <property type="match status" value="1"/>
</dbReference>
<dbReference type="SUPFAM" id="SSF56796">
    <property type="entry name" value="Dehydroquinate synthase-like"/>
    <property type="match status" value="1"/>
</dbReference>
<accession>P0DH71</accession>
<accession>Q9ANY9</accession>
<proteinExistence type="inferred from homology"/>
<sequence>MKLTVTLPTHSYDLTIETGALDKIGTWVRSLWQPQRVAIITDETVNKLYGAAVEKELQAAGFETSLIAVAAGEQSKSLEIAQLLYDFLAEQQLTRSDGLIALGGGVVGDLAGFVASTYMRGIHFLQVPTTLLAQVDSSIGGKTAVNTKKAKNLVGTFAQPDGVLIDPNTLKTLEPRRVREGIAEIVKSAAIADVELWHRLSSLENEQDLVAHAEEIITACCKIKRDVVEEDELDLGLRLILNFGHTIGHALENTAGYGVIAHGEGVSLGMIQITQVAEQQGLSPLGTTQELVTMLEKFHLPVTTDRWSEERLYQAITHDKKTRGGQIKIIVLEKIGQAKIVSLPTEEIRAFLNREGGI</sequence>
<gene>
    <name evidence="1" type="primary">aroB</name>
    <name type="ordered locus">EF_1563</name>
</gene>